<proteinExistence type="evidence at transcript level"/>
<dbReference type="EMBL" id="AP003849">
    <property type="protein sequence ID" value="BAC81170.1"/>
    <property type="molecule type" value="Genomic_DNA"/>
</dbReference>
<dbReference type="EMBL" id="AP005465">
    <property type="protein sequence ID" value="BAD31464.1"/>
    <property type="molecule type" value="Genomic_DNA"/>
</dbReference>
<dbReference type="EMBL" id="AP008213">
    <property type="protein sequence ID" value="BAF21564.1"/>
    <property type="molecule type" value="Genomic_DNA"/>
</dbReference>
<dbReference type="EMBL" id="AP014963">
    <property type="protein sequence ID" value="BAT01508.1"/>
    <property type="molecule type" value="Genomic_DNA"/>
</dbReference>
<dbReference type="EMBL" id="CM000144">
    <property type="protein sequence ID" value="EEE67174.1"/>
    <property type="molecule type" value="Genomic_DNA"/>
</dbReference>
<dbReference type="EMBL" id="AK064741">
    <property type="protein sequence ID" value="BAG89183.1"/>
    <property type="molecule type" value="mRNA"/>
</dbReference>
<dbReference type="RefSeq" id="XP_015645750.1">
    <property type="nucleotide sequence ID" value="XM_015790264.1"/>
</dbReference>
<dbReference type="RefSeq" id="XP_015645751.1">
    <property type="nucleotide sequence ID" value="XM_015790265.1"/>
</dbReference>
<dbReference type="SMR" id="Q7XAM0"/>
<dbReference type="FunCoup" id="Q7XAM0">
    <property type="interactions" value="50"/>
</dbReference>
<dbReference type="STRING" id="39947.Q7XAM0"/>
<dbReference type="PaxDb" id="39947-Q7XAM0"/>
<dbReference type="DNASU" id="4343243"/>
<dbReference type="EnsemblPlants" id="Os07t0484500-01">
    <property type="protein sequence ID" value="Os07t0484500-01"/>
    <property type="gene ID" value="Os07g0484500"/>
</dbReference>
<dbReference type="GeneID" id="4343243"/>
<dbReference type="Gramene" id="Os07t0484500-01">
    <property type="protein sequence ID" value="Os07t0484500-01"/>
    <property type="gene ID" value="Os07g0484500"/>
</dbReference>
<dbReference type="KEGG" id="dosa:Os07g0484500"/>
<dbReference type="KEGG" id="osa:4343243"/>
<dbReference type="eggNOG" id="KOG4832">
    <property type="taxonomic scope" value="Eukaryota"/>
</dbReference>
<dbReference type="HOGENOM" id="CLU_087423_0_0_1"/>
<dbReference type="InParanoid" id="Q7XAM0"/>
<dbReference type="OMA" id="PTGMRED"/>
<dbReference type="OrthoDB" id="5962at2759"/>
<dbReference type="Proteomes" id="UP000000763">
    <property type="component" value="Chromosome 7"/>
</dbReference>
<dbReference type="Proteomes" id="UP000007752">
    <property type="component" value="Chromosome 7"/>
</dbReference>
<dbReference type="Proteomes" id="UP000059680">
    <property type="component" value="Chromosome 7"/>
</dbReference>
<dbReference type="GO" id="GO:0072686">
    <property type="term" value="C:mitotic spindle"/>
    <property type="evidence" value="ECO:0000318"/>
    <property type="project" value="GO_Central"/>
</dbReference>
<dbReference type="GO" id="GO:0000940">
    <property type="term" value="C:outer kinetochore"/>
    <property type="evidence" value="ECO:0000318"/>
    <property type="project" value="GO_Central"/>
</dbReference>
<dbReference type="GO" id="GO:0005876">
    <property type="term" value="C:spindle microtubule"/>
    <property type="evidence" value="ECO:0000318"/>
    <property type="project" value="GO_Central"/>
</dbReference>
<dbReference type="GO" id="GO:0008017">
    <property type="term" value="F:microtubule binding"/>
    <property type="evidence" value="ECO:0000250"/>
    <property type="project" value="UniProtKB"/>
</dbReference>
<dbReference type="GO" id="GO:0051315">
    <property type="term" value="P:attachment of mitotic spindle microtubules to kinetochore"/>
    <property type="evidence" value="ECO:0000250"/>
    <property type="project" value="UniProtKB"/>
</dbReference>
<dbReference type="GO" id="GO:0051301">
    <property type="term" value="P:cell division"/>
    <property type="evidence" value="ECO:0007669"/>
    <property type="project" value="InterPro"/>
</dbReference>
<dbReference type="GO" id="GO:0007059">
    <property type="term" value="P:chromosome segregation"/>
    <property type="evidence" value="ECO:0000318"/>
    <property type="project" value="GO_Central"/>
</dbReference>
<dbReference type="GO" id="GO:0000278">
    <property type="term" value="P:mitotic cell cycle"/>
    <property type="evidence" value="ECO:0000318"/>
    <property type="project" value="GO_Central"/>
</dbReference>
<dbReference type="GO" id="GO:0031110">
    <property type="term" value="P:regulation of microtubule polymerization or depolymerization"/>
    <property type="evidence" value="ECO:0000318"/>
    <property type="project" value="GO_Central"/>
</dbReference>
<dbReference type="FunFam" id="1.10.10.1890:FF:000002">
    <property type="entry name" value="Spindle and kinetochore-associated protein 1"/>
    <property type="match status" value="1"/>
</dbReference>
<dbReference type="Gene3D" id="1.10.10.1890">
    <property type="entry name" value="Ska1 microtubule binding domain-like"/>
    <property type="match status" value="1"/>
</dbReference>
<dbReference type="InterPro" id="IPR009829">
    <property type="entry name" value="SKA1"/>
</dbReference>
<dbReference type="InterPro" id="IPR042031">
    <property type="entry name" value="SKA1_MBD_sf"/>
</dbReference>
<dbReference type="PANTHER" id="PTHR28573">
    <property type="entry name" value="SPINDLE AND KINETOCHORE-ASSOCIATED PROTEIN 1"/>
    <property type="match status" value="1"/>
</dbReference>
<dbReference type="PANTHER" id="PTHR28573:SF1">
    <property type="entry name" value="SPINDLE AND KINETOCHORE-ASSOCIATED PROTEIN 1"/>
    <property type="match status" value="1"/>
</dbReference>
<dbReference type="Pfam" id="PF07160">
    <property type="entry name" value="SKA1"/>
    <property type="match status" value="1"/>
</dbReference>
<keyword id="KW-0175">Coiled coil</keyword>
<keyword id="KW-1185">Reference proteome</keyword>
<comment type="similarity">
    <text evidence="2">Belongs to the SKA1 family.</text>
</comment>
<evidence type="ECO:0000255" key="1"/>
<evidence type="ECO:0000305" key="2"/>
<gene>
    <name type="ordered locus">Os07g0484500</name>
    <name type="ordered locus">LOC_Os07g30110</name>
    <name type="ORF">OJ1136_F08.123</name>
    <name type="ORF">OJ1753_E03.102</name>
    <name type="ORF">OsJ_24262</name>
</gene>
<name>SKA1_ORYSJ</name>
<accession>Q7XAM0</accession>
<accession>A0A0P0X5V8</accession>
<protein>
    <recommendedName>
        <fullName evidence="2">SKA complex subunit 1 homolog</fullName>
    </recommendedName>
    <alternativeName>
        <fullName evidence="2">Spindle and kinetochore-associated protein 1 homolog</fullName>
    </alternativeName>
</protein>
<organism>
    <name type="scientific">Oryza sativa subsp. japonica</name>
    <name type="common">Rice</name>
    <dbReference type="NCBI Taxonomy" id="39947"/>
    <lineage>
        <taxon>Eukaryota</taxon>
        <taxon>Viridiplantae</taxon>
        <taxon>Streptophyta</taxon>
        <taxon>Embryophyta</taxon>
        <taxon>Tracheophyta</taxon>
        <taxon>Spermatophyta</taxon>
        <taxon>Magnoliopsida</taxon>
        <taxon>Liliopsida</taxon>
        <taxon>Poales</taxon>
        <taxon>Poaceae</taxon>
        <taxon>BOP clade</taxon>
        <taxon>Oryzoideae</taxon>
        <taxon>Oryzeae</taxon>
        <taxon>Oryzinae</taxon>
        <taxon>Oryza</taxon>
        <taxon>Oryza sativa</taxon>
    </lineage>
</organism>
<feature type="chain" id="PRO_0000373893" description="SKA complex subunit 1 homolog">
    <location>
        <begin position="1"/>
        <end position="276"/>
    </location>
</feature>
<feature type="coiled-coil region" evidence="1">
    <location>
        <begin position="48"/>
        <end position="78"/>
    </location>
</feature>
<sequence>MDAGDASRLGESLDAVSAAFQSRVMELQELVLARNMYPATAIPDLAAVDVSLTAMEAQLQAVRRRLQEEREAFPKAKKLVQQSLKQQRRLQLMLANMPTGMREDVFATPLEHNSSMMFPESLNFSSAVPEVRDHDLKIKEEPTAPPKKGRGPAPRWYISTEELDSLSSYMRGRLTLEKVNIAINEVASYADGNAHLVACPKKKLSEDTWEKALELRDIAARESVKGRHFFLETDIKGPGLKLDTTGKAILTVLRHLGRFQETRIGHHRVFILSKQQ</sequence>
<reference key="1">
    <citation type="journal article" date="2005" name="Nature">
        <title>The map-based sequence of the rice genome.</title>
        <authorList>
            <consortium name="International rice genome sequencing project (IRGSP)"/>
        </authorList>
    </citation>
    <scope>NUCLEOTIDE SEQUENCE [LARGE SCALE GENOMIC DNA]</scope>
    <source>
        <strain>cv. Nipponbare</strain>
    </source>
</reference>
<reference key="2">
    <citation type="journal article" date="2008" name="Nucleic Acids Res.">
        <title>The rice annotation project database (RAP-DB): 2008 update.</title>
        <authorList>
            <consortium name="The rice annotation project (RAP)"/>
        </authorList>
    </citation>
    <scope>GENOME REANNOTATION</scope>
    <source>
        <strain>cv. Nipponbare</strain>
    </source>
</reference>
<reference key="3">
    <citation type="journal article" date="2013" name="Rice">
        <title>Improvement of the Oryza sativa Nipponbare reference genome using next generation sequence and optical map data.</title>
        <authorList>
            <person name="Kawahara Y."/>
            <person name="de la Bastide M."/>
            <person name="Hamilton J.P."/>
            <person name="Kanamori H."/>
            <person name="McCombie W.R."/>
            <person name="Ouyang S."/>
            <person name="Schwartz D.C."/>
            <person name="Tanaka T."/>
            <person name="Wu J."/>
            <person name="Zhou S."/>
            <person name="Childs K.L."/>
            <person name="Davidson R.M."/>
            <person name="Lin H."/>
            <person name="Quesada-Ocampo L."/>
            <person name="Vaillancourt B."/>
            <person name="Sakai H."/>
            <person name="Lee S.S."/>
            <person name="Kim J."/>
            <person name="Numa H."/>
            <person name="Itoh T."/>
            <person name="Buell C.R."/>
            <person name="Matsumoto T."/>
        </authorList>
    </citation>
    <scope>GENOME REANNOTATION</scope>
    <source>
        <strain>cv. Nipponbare</strain>
    </source>
</reference>
<reference key="4">
    <citation type="journal article" date="2005" name="PLoS Biol.">
        <title>The genomes of Oryza sativa: a history of duplications.</title>
        <authorList>
            <person name="Yu J."/>
            <person name="Wang J."/>
            <person name="Lin W."/>
            <person name="Li S."/>
            <person name="Li H."/>
            <person name="Zhou J."/>
            <person name="Ni P."/>
            <person name="Dong W."/>
            <person name="Hu S."/>
            <person name="Zeng C."/>
            <person name="Zhang J."/>
            <person name="Zhang Y."/>
            <person name="Li R."/>
            <person name="Xu Z."/>
            <person name="Li S."/>
            <person name="Li X."/>
            <person name="Zheng H."/>
            <person name="Cong L."/>
            <person name="Lin L."/>
            <person name="Yin J."/>
            <person name="Geng J."/>
            <person name="Li G."/>
            <person name="Shi J."/>
            <person name="Liu J."/>
            <person name="Lv H."/>
            <person name="Li J."/>
            <person name="Wang J."/>
            <person name="Deng Y."/>
            <person name="Ran L."/>
            <person name="Shi X."/>
            <person name="Wang X."/>
            <person name="Wu Q."/>
            <person name="Li C."/>
            <person name="Ren X."/>
            <person name="Wang J."/>
            <person name="Wang X."/>
            <person name="Li D."/>
            <person name="Liu D."/>
            <person name="Zhang X."/>
            <person name="Ji Z."/>
            <person name="Zhao W."/>
            <person name="Sun Y."/>
            <person name="Zhang Z."/>
            <person name="Bao J."/>
            <person name="Han Y."/>
            <person name="Dong L."/>
            <person name="Ji J."/>
            <person name="Chen P."/>
            <person name="Wu S."/>
            <person name="Liu J."/>
            <person name="Xiao Y."/>
            <person name="Bu D."/>
            <person name="Tan J."/>
            <person name="Yang L."/>
            <person name="Ye C."/>
            <person name="Zhang J."/>
            <person name="Xu J."/>
            <person name="Zhou Y."/>
            <person name="Yu Y."/>
            <person name="Zhang B."/>
            <person name="Zhuang S."/>
            <person name="Wei H."/>
            <person name="Liu B."/>
            <person name="Lei M."/>
            <person name="Yu H."/>
            <person name="Li Y."/>
            <person name="Xu H."/>
            <person name="Wei S."/>
            <person name="He X."/>
            <person name="Fang L."/>
            <person name="Zhang Z."/>
            <person name="Zhang Y."/>
            <person name="Huang X."/>
            <person name="Su Z."/>
            <person name="Tong W."/>
            <person name="Li J."/>
            <person name="Tong Z."/>
            <person name="Li S."/>
            <person name="Ye J."/>
            <person name="Wang L."/>
            <person name="Fang L."/>
            <person name="Lei T."/>
            <person name="Chen C.-S."/>
            <person name="Chen H.-C."/>
            <person name="Xu Z."/>
            <person name="Li H."/>
            <person name="Huang H."/>
            <person name="Zhang F."/>
            <person name="Xu H."/>
            <person name="Li N."/>
            <person name="Zhao C."/>
            <person name="Li S."/>
            <person name="Dong L."/>
            <person name="Huang Y."/>
            <person name="Li L."/>
            <person name="Xi Y."/>
            <person name="Qi Q."/>
            <person name="Li W."/>
            <person name="Zhang B."/>
            <person name="Hu W."/>
            <person name="Zhang Y."/>
            <person name="Tian X."/>
            <person name="Jiao Y."/>
            <person name="Liang X."/>
            <person name="Jin J."/>
            <person name="Gao L."/>
            <person name="Zheng W."/>
            <person name="Hao B."/>
            <person name="Liu S.-M."/>
            <person name="Wang W."/>
            <person name="Yuan L."/>
            <person name="Cao M."/>
            <person name="McDermott J."/>
            <person name="Samudrala R."/>
            <person name="Wang J."/>
            <person name="Wong G.K.-S."/>
            <person name="Yang H."/>
        </authorList>
    </citation>
    <scope>NUCLEOTIDE SEQUENCE [LARGE SCALE GENOMIC DNA]</scope>
    <source>
        <strain>cv. Nipponbare</strain>
    </source>
</reference>
<reference key="5">
    <citation type="journal article" date="2003" name="Science">
        <title>Collection, mapping, and annotation of over 28,000 cDNA clones from japonica rice.</title>
        <authorList>
            <consortium name="The rice full-length cDNA consortium"/>
        </authorList>
    </citation>
    <scope>NUCLEOTIDE SEQUENCE [LARGE SCALE MRNA]</scope>
    <source>
        <strain>cv. Nipponbare</strain>
    </source>
</reference>